<protein>
    <recommendedName>
        <fullName evidence="1">Probable transcriptional regulatory protein Csal_1845</fullName>
    </recommendedName>
</protein>
<accession>Q1QWG1</accession>
<gene>
    <name type="ordered locus">Csal_1845</name>
</gene>
<keyword id="KW-0963">Cytoplasm</keyword>
<keyword id="KW-0238">DNA-binding</keyword>
<keyword id="KW-1185">Reference proteome</keyword>
<keyword id="KW-0804">Transcription</keyword>
<keyword id="KW-0805">Transcription regulation</keyword>
<sequence length="249" mass="27013">MAGHSKWANIKHRKAAQDAKRGKIFSKLIRELTVASRQGGGEVADNPRLRAAIDKALANNMTKDTIQRAIERGAGNTDGDEMEETVYEGYGPEGVAVLVECMTDNRNRTVSDVRHAFSKNGGNLGTSGSVAFMFHKQGRLTLPEGVSEETAMEATLAAEPEDIVTQADGTLEVVTSPERFGAVKDALLEADIEPVASDVGLYPDNYTSIDDVETARKVLKLFDMLEDLDDVQNVYSNADFSDAVMAELE</sequence>
<organism>
    <name type="scientific">Chromohalobacter salexigens (strain ATCC BAA-138 / DSM 3043 / CIP 106854 / NCIMB 13768 / 1H11)</name>
    <dbReference type="NCBI Taxonomy" id="290398"/>
    <lineage>
        <taxon>Bacteria</taxon>
        <taxon>Pseudomonadati</taxon>
        <taxon>Pseudomonadota</taxon>
        <taxon>Gammaproteobacteria</taxon>
        <taxon>Oceanospirillales</taxon>
        <taxon>Halomonadaceae</taxon>
        <taxon>Chromohalobacter</taxon>
    </lineage>
</organism>
<dbReference type="EMBL" id="CP000285">
    <property type="protein sequence ID" value="ABE59197.1"/>
    <property type="molecule type" value="Genomic_DNA"/>
</dbReference>
<dbReference type="RefSeq" id="WP_011507143.1">
    <property type="nucleotide sequence ID" value="NC_007963.1"/>
</dbReference>
<dbReference type="SMR" id="Q1QWG1"/>
<dbReference type="STRING" id="290398.Csal_1845"/>
<dbReference type="GeneID" id="95334562"/>
<dbReference type="KEGG" id="csa:Csal_1845"/>
<dbReference type="eggNOG" id="COG0217">
    <property type="taxonomic scope" value="Bacteria"/>
</dbReference>
<dbReference type="HOGENOM" id="CLU_062974_2_2_6"/>
<dbReference type="OrthoDB" id="9781053at2"/>
<dbReference type="Proteomes" id="UP000000239">
    <property type="component" value="Chromosome"/>
</dbReference>
<dbReference type="GO" id="GO:0005829">
    <property type="term" value="C:cytosol"/>
    <property type="evidence" value="ECO:0007669"/>
    <property type="project" value="TreeGrafter"/>
</dbReference>
<dbReference type="GO" id="GO:0003677">
    <property type="term" value="F:DNA binding"/>
    <property type="evidence" value="ECO:0007669"/>
    <property type="project" value="UniProtKB-UniRule"/>
</dbReference>
<dbReference type="GO" id="GO:0006355">
    <property type="term" value="P:regulation of DNA-templated transcription"/>
    <property type="evidence" value="ECO:0007669"/>
    <property type="project" value="UniProtKB-UniRule"/>
</dbReference>
<dbReference type="FunFam" id="1.10.10.200:FF:000001">
    <property type="entry name" value="Probable transcriptional regulatory protein YebC"/>
    <property type="match status" value="1"/>
</dbReference>
<dbReference type="Gene3D" id="1.10.10.200">
    <property type="match status" value="1"/>
</dbReference>
<dbReference type="Gene3D" id="3.30.70.980">
    <property type="match status" value="2"/>
</dbReference>
<dbReference type="HAMAP" id="MF_00693">
    <property type="entry name" value="Transcrip_reg_TACO1"/>
    <property type="match status" value="1"/>
</dbReference>
<dbReference type="InterPro" id="IPR017856">
    <property type="entry name" value="Integrase-like_N"/>
</dbReference>
<dbReference type="InterPro" id="IPR048300">
    <property type="entry name" value="TACO1_YebC-like_2nd/3rd_dom"/>
</dbReference>
<dbReference type="InterPro" id="IPR049083">
    <property type="entry name" value="TACO1_YebC_N"/>
</dbReference>
<dbReference type="InterPro" id="IPR002876">
    <property type="entry name" value="Transcrip_reg_TACO1-like"/>
</dbReference>
<dbReference type="InterPro" id="IPR026564">
    <property type="entry name" value="Transcrip_reg_TACO1-like_dom3"/>
</dbReference>
<dbReference type="InterPro" id="IPR029072">
    <property type="entry name" value="YebC-like"/>
</dbReference>
<dbReference type="NCBIfam" id="NF001030">
    <property type="entry name" value="PRK00110.1"/>
    <property type="match status" value="1"/>
</dbReference>
<dbReference type="NCBIfam" id="NF009044">
    <property type="entry name" value="PRK12378.1"/>
    <property type="match status" value="1"/>
</dbReference>
<dbReference type="NCBIfam" id="TIGR01033">
    <property type="entry name" value="YebC/PmpR family DNA-binding transcriptional regulator"/>
    <property type="match status" value="1"/>
</dbReference>
<dbReference type="PANTHER" id="PTHR12532:SF6">
    <property type="entry name" value="TRANSCRIPTIONAL REGULATORY PROTEIN YEBC-RELATED"/>
    <property type="match status" value="1"/>
</dbReference>
<dbReference type="PANTHER" id="PTHR12532">
    <property type="entry name" value="TRANSLATIONAL ACTIVATOR OF CYTOCHROME C OXIDASE 1"/>
    <property type="match status" value="1"/>
</dbReference>
<dbReference type="Pfam" id="PF20772">
    <property type="entry name" value="TACO1_YebC_N"/>
    <property type="match status" value="1"/>
</dbReference>
<dbReference type="Pfam" id="PF01709">
    <property type="entry name" value="Transcrip_reg"/>
    <property type="match status" value="1"/>
</dbReference>
<dbReference type="SUPFAM" id="SSF75625">
    <property type="entry name" value="YebC-like"/>
    <property type="match status" value="1"/>
</dbReference>
<proteinExistence type="inferred from homology"/>
<evidence type="ECO:0000255" key="1">
    <source>
        <dbReference type="HAMAP-Rule" id="MF_00693"/>
    </source>
</evidence>
<name>Y1845_CHRSD</name>
<reference key="1">
    <citation type="journal article" date="2011" name="Stand. Genomic Sci.">
        <title>Complete genome sequence of the halophilic and highly halotolerant Chromohalobacter salexigens type strain (1H11(T)).</title>
        <authorList>
            <person name="Copeland A."/>
            <person name="O'Connor K."/>
            <person name="Lucas S."/>
            <person name="Lapidus A."/>
            <person name="Berry K.W."/>
            <person name="Detter J.C."/>
            <person name="Del Rio T.G."/>
            <person name="Hammon N."/>
            <person name="Dalin E."/>
            <person name="Tice H."/>
            <person name="Pitluck S."/>
            <person name="Bruce D."/>
            <person name="Goodwin L."/>
            <person name="Han C."/>
            <person name="Tapia R."/>
            <person name="Saunders E."/>
            <person name="Schmutz J."/>
            <person name="Brettin T."/>
            <person name="Larimer F."/>
            <person name="Land M."/>
            <person name="Hauser L."/>
            <person name="Vargas C."/>
            <person name="Nieto J.J."/>
            <person name="Kyrpides N.C."/>
            <person name="Ivanova N."/>
            <person name="Goker M."/>
            <person name="Klenk H.P."/>
            <person name="Csonka L.N."/>
            <person name="Woyke T."/>
        </authorList>
    </citation>
    <scope>NUCLEOTIDE SEQUENCE [LARGE SCALE GENOMIC DNA]</scope>
    <source>
        <strain>ATCC BAA-138 / DSM 3043 / CIP 106854 / NCIMB 13768 / 1H11</strain>
    </source>
</reference>
<comment type="subcellular location">
    <subcellularLocation>
        <location evidence="1">Cytoplasm</location>
    </subcellularLocation>
</comment>
<comment type="similarity">
    <text evidence="1">Belongs to the TACO1 family.</text>
</comment>
<feature type="chain" id="PRO_0000257046" description="Probable transcriptional regulatory protein Csal_1845">
    <location>
        <begin position="1"/>
        <end position="249"/>
    </location>
</feature>